<evidence type="ECO:0000255" key="1">
    <source>
        <dbReference type="HAMAP-Rule" id="MF_01663"/>
    </source>
</evidence>
<protein>
    <recommendedName>
        <fullName evidence="1">L-rhamnose mutarotase</fullName>
        <ecNumber evidence="1">5.1.3.32</ecNumber>
    </recommendedName>
    <alternativeName>
        <fullName evidence="1">Rhamnose 1-epimerase</fullName>
    </alternativeName>
    <alternativeName>
        <fullName evidence="1">Type-3 mutarotase</fullName>
    </alternativeName>
</protein>
<accession>B1LMU1</accession>
<gene>
    <name evidence="1" type="primary">rhaM</name>
    <name type="ordered locus">EcSMS35_4292</name>
</gene>
<sequence length="104" mass="12235">MIRKAFVMQVNPDAHEEYQRRHNPIWPELEAVLKSHGAHNYAIYLDKARNLLFATVEIESEERWNAVASTDVCQRWWKYMTDVMPANPDNSPVSSELQEVFYLP</sequence>
<dbReference type="EC" id="5.1.3.32" evidence="1"/>
<dbReference type="EMBL" id="CP000970">
    <property type="protein sequence ID" value="ACB17406.1"/>
    <property type="molecule type" value="Genomic_DNA"/>
</dbReference>
<dbReference type="RefSeq" id="WP_000619503.1">
    <property type="nucleotide sequence ID" value="NC_010498.1"/>
</dbReference>
<dbReference type="BMRB" id="B1LMU1"/>
<dbReference type="SMR" id="B1LMU1"/>
<dbReference type="GeneID" id="93778037"/>
<dbReference type="KEGG" id="ecm:EcSMS35_4292"/>
<dbReference type="HOGENOM" id="CLU_100689_2_0_6"/>
<dbReference type="UniPathway" id="UPA00125"/>
<dbReference type="Proteomes" id="UP000007011">
    <property type="component" value="Chromosome"/>
</dbReference>
<dbReference type="GO" id="GO:0005737">
    <property type="term" value="C:cytoplasm"/>
    <property type="evidence" value="ECO:0007669"/>
    <property type="project" value="UniProtKB-SubCell"/>
</dbReference>
<dbReference type="GO" id="GO:0062192">
    <property type="term" value="F:L-rhamnose mutarotase activity"/>
    <property type="evidence" value="ECO:0007669"/>
    <property type="project" value="UniProtKB-EC"/>
</dbReference>
<dbReference type="GO" id="GO:0019301">
    <property type="term" value="P:rhamnose catabolic process"/>
    <property type="evidence" value="ECO:0007669"/>
    <property type="project" value="TreeGrafter"/>
</dbReference>
<dbReference type="FunFam" id="3.30.70.100:FF:000013">
    <property type="entry name" value="L-rhamnose mutarotase"/>
    <property type="match status" value="1"/>
</dbReference>
<dbReference type="Gene3D" id="3.30.70.100">
    <property type="match status" value="1"/>
</dbReference>
<dbReference type="HAMAP" id="MF_01663">
    <property type="entry name" value="L_rham_rotase"/>
    <property type="match status" value="1"/>
</dbReference>
<dbReference type="InterPro" id="IPR011008">
    <property type="entry name" value="Dimeric_a/b-barrel"/>
</dbReference>
<dbReference type="InterPro" id="IPR013448">
    <property type="entry name" value="L-rhamnose_mutarotase"/>
</dbReference>
<dbReference type="InterPro" id="IPR008000">
    <property type="entry name" value="Rham/fucose_mutarotase"/>
</dbReference>
<dbReference type="NCBIfam" id="TIGR02625">
    <property type="entry name" value="YiiL_rotase"/>
    <property type="match status" value="1"/>
</dbReference>
<dbReference type="PANTHER" id="PTHR34389">
    <property type="entry name" value="L-RHAMNOSE MUTAROTASE"/>
    <property type="match status" value="1"/>
</dbReference>
<dbReference type="PANTHER" id="PTHR34389:SF2">
    <property type="entry name" value="L-RHAMNOSE MUTAROTASE"/>
    <property type="match status" value="1"/>
</dbReference>
<dbReference type="Pfam" id="PF05336">
    <property type="entry name" value="rhaM"/>
    <property type="match status" value="1"/>
</dbReference>
<dbReference type="SUPFAM" id="SSF54909">
    <property type="entry name" value="Dimeric alpha+beta barrel"/>
    <property type="match status" value="1"/>
</dbReference>
<proteinExistence type="inferred from homology"/>
<comment type="function">
    <text evidence="1">Involved in the anomeric conversion of L-rhamnose.</text>
</comment>
<comment type="catalytic activity">
    <reaction evidence="1">
        <text>alpha-L-rhamnose = beta-L-rhamnose</text>
        <dbReference type="Rhea" id="RHEA:25584"/>
        <dbReference type="ChEBI" id="CHEBI:27586"/>
        <dbReference type="ChEBI" id="CHEBI:27907"/>
        <dbReference type="EC" id="5.1.3.32"/>
    </reaction>
</comment>
<comment type="pathway">
    <text evidence="1">Carbohydrate metabolism; L-rhamnose metabolism.</text>
</comment>
<comment type="subunit">
    <text evidence="1">Homodimer.</text>
</comment>
<comment type="subcellular location">
    <subcellularLocation>
        <location evidence="1">Cytoplasm</location>
    </subcellularLocation>
</comment>
<comment type="similarity">
    <text evidence="1">Belongs to the rhamnose mutarotase family.</text>
</comment>
<reference key="1">
    <citation type="journal article" date="2008" name="J. Bacteriol.">
        <title>Insights into the environmental resistance gene pool from the genome sequence of the multidrug-resistant environmental isolate Escherichia coli SMS-3-5.</title>
        <authorList>
            <person name="Fricke W.F."/>
            <person name="Wright M.S."/>
            <person name="Lindell A.H."/>
            <person name="Harkins D.M."/>
            <person name="Baker-Austin C."/>
            <person name="Ravel J."/>
            <person name="Stepanauskas R."/>
        </authorList>
    </citation>
    <scope>NUCLEOTIDE SEQUENCE [LARGE SCALE GENOMIC DNA]</scope>
    <source>
        <strain>SMS-3-5 / SECEC</strain>
    </source>
</reference>
<organism>
    <name type="scientific">Escherichia coli (strain SMS-3-5 / SECEC)</name>
    <dbReference type="NCBI Taxonomy" id="439855"/>
    <lineage>
        <taxon>Bacteria</taxon>
        <taxon>Pseudomonadati</taxon>
        <taxon>Pseudomonadota</taxon>
        <taxon>Gammaproteobacteria</taxon>
        <taxon>Enterobacterales</taxon>
        <taxon>Enterobacteriaceae</taxon>
        <taxon>Escherichia</taxon>
    </lineage>
</organism>
<name>RHAM_ECOSM</name>
<feature type="chain" id="PRO_0000344571" description="L-rhamnose mutarotase">
    <location>
        <begin position="1"/>
        <end position="104"/>
    </location>
</feature>
<feature type="active site" description="Proton donor" evidence="1">
    <location>
        <position position="22"/>
    </location>
</feature>
<feature type="binding site" evidence="1">
    <location>
        <position position="18"/>
    </location>
    <ligand>
        <name>substrate</name>
    </ligand>
</feature>
<feature type="binding site" evidence="1">
    <location>
        <position position="41"/>
    </location>
    <ligand>
        <name>substrate</name>
    </ligand>
</feature>
<feature type="binding site" evidence="1">
    <location>
        <begin position="76"/>
        <end position="77"/>
    </location>
    <ligand>
        <name>substrate</name>
    </ligand>
</feature>
<keyword id="KW-0119">Carbohydrate metabolism</keyword>
<keyword id="KW-0963">Cytoplasm</keyword>
<keyword id="KW-0413">Isomerase</keyword>
<keyword id="KW-0684">Rhamnose metabolism</keyword>